<reference key="1">
    <citation type="journal article" date="2007" name="Genome Res.">
        <title>Genome characteristics of facultatively symbiotic Frankia sp. strains reflect host range and host plant biogeography.</title>
        <authorList>
            <person name="Normand P."/>
            <person name="Lapierre P."/>
            <person name="Tisa L.S."/>
            <person name="Gogarten J.P."/>
            <person name="Alloisio N."/>
            <person name="Bagnarol E."/>
            <person name="Bassi C.A."/>
            <person name="Berry A.M."/>
            <person name="Bickhart D.M."/>
            <person name="Choisne N."/>
            <person name="Couloux A."/>
            <person name="Cournoyer B."/>
            <person name="Cruveiller S."/>
            <person name="Daubin V."/>
            <person name="Demange N."/>
            <person name="Francino M.P."/>
            <person name="Goltsman E."/>
            <person name="Huang Y."/>
            <person name="Kopp O.R."/>
            <person name="Labarre L."/>
            <person name="Lapidus A."/>
            <person name="Lavire C."/>
            <person name="Marechal J."/>
            <person name="Martinez M."/>
            <person name="Mastronunzio J.E."/>
            <person name="Mullin B.C."/>
            <person name="Niemann J."/>
            <person name="Pujic P."/>
            <person name="Rawnsley T."/>
            <person name="Rouy Z."/>
            <person name="Schenowitz C."/>
            <person name="Sellstedt A."/>
            <person name="Tavares F."/>
            <person name="Tomkins J.P."/>
            <person name="Vallenet D."/>
            <person name="Valverde C."/>
            <person name="Wall L.G."/>
            <person name="Wang Y."/>
            <person name="Medigue C."/>
            <person name="Benson D.R."/>
        </authorList>
    </citation>
    <scope>NUCLEOTIDE SEQUENCE [LARGE SCALE GENOMIC DNA]</scope>
    <source>
        <strain>EAN1pec</strain>
    </source>
</reference>
<evidence type="ECO:0000255" key="1">
    <source>
        <dbReference type="HAMAP-Rule" id="MF_01369"/>
    </source>
</evidence>
<evidence type="ECO:0000305" key="2"/>
<comment type="function">
    <text evidence="1">One of the early assembly proteins it binds 23S rRNA. One of the proteins that surrounds the polypeptide exit tunnel on the outside of the ribosome. Forms the main docking site for trigger factor binding to the ribosome.</text>
</comment>
<comment type="subunit">
    <text evidence="1">Part of the 50S ribosomal subunit. Contacts protein L29, and trigger factor when it is bound to the ribosome.</text>
</comment>
<comment type="similarity">
    <text evidence="1">Belongs to the universal ribosomal protein uL23 family.</text>
</comment>
<accession>A8LC54</accession>
<protein>
    <recommendedName>
        <fullName evidence="1">Large ribosomal subunit protein uL23</fullName>
    </recommendedName>
    <alternativeName>
        <fullName evidence="2">50S ribosomal protein L23</fullName>
    </alternativeName>
</protein>
<sequence>MIPDPRDIILRPVVSEKSYGLLDENVYTFIVRPDANKTQIKLAVQKIFNVRVTRVNTINRAGKRKRTKHGWGHRSATKRALVSLAPGDSIEIFGGPGA</sequence>
<feature type="chain" id="PRO_1000144567" description="Large ribosomal subunit protein uL23">
    <location>
        <begin position="1"/>
        <end position="98"/>
    </location>
</feature>
<dbReference type="EMBL" id="CP000820">
    <property type="protein sequence ID" value="ABW15391.1"/>
    <property type="molecule type" value="Genomic_DNA"/>
</dbReference>
<dbReference type="RefSeq" id="WP_018505130.1">
    <property type="nucleotide sequence ID" value="NC_009921.1"/>
</dbReference>
<dbReference type="SMR" id="A8LC54"/>
<dbReference type="STRING" id="298653.Franean1_6047"/>
<dbReference type="KEGG" id="fre:Franean1_6047"/>
<dbReference type="eggNOG" id="COG0089">
    <property type="taxonomic scope" value="Bacteria"/>
</dbReference>
<dbReference type="HOGENOM" id="CLU_037562_3_2_11"/>
<dbReference type="GO" id="GO:1990904">
    <property type="term" value="C:ribonucleoprotein complex"/>
    <property type="evidence" value="ECO:0007669"/>
    <property type="project" value="UniProtKB-KW"/>
</dbReference>
<dbReference type="GO" id="GO:0005840">
    <property type="term" value="C:ribosome"/>
    <property type="evidence" value="ECO:0007669"/>
    <property type="project" value="UniProtKB-KW"/>
</dbReference>
<dbReference type="GO" id="GO:0019843">
    <property type="term" value="F:rRNA binding"/>
    <property type="evidence" value="ECO:0007669"/>
    <property type="project" value="UniProtKB-UniRule"/>
</dbReference>
<dbReference type="GO" id="GO:0003735">
    <property type="term" value="F:structural constituent of ribosome"/>
    <property type="evidence" value="ECO:0007669"/>
    <property type="project" value="InterPro"/>
</dbReference>
<dbReference type="GO" id="GO:0006412">
    <property type="term" value="P:translation"/>
    <property type="evidence" value="ECO:0007669"/>
    <property type="project" value="UniProtKB-UniRule"/>
</dbReference>
<dbReference type="FunFam" id="3.30.70.330:FF:000001">
    <property type="entry name" value="50S ribosomal protein L23"/>
    <property type="match status" value="1"/>
</dbReference>
<dbReference type="Gene3D" id="3.30.70.330">
    <property type="match status" value="1"/>
</dbReference>
<dbReference type="HAMAP" id="MF_01369_B">
    <property type="entry name" value="Ribosomal_uL23_B"/>
    <property type="match status" value="1"/>
</dbReference>
<dbReference type="InterPro" id="IPR012677">
    <property type="entry name" value="Nucleotide-bd_a/b_plait_sf"/>
</dbReference>
<dbReference type="InterPro" id="IPR013025">
    <property type="entry name" value="Ribosomal_uL23-like"/>
</dbReference>
<dbReference type="InterPro" id="IPR012678">
    <property type="entry name" value="Ribosomal_uL23/eL15/eS24_sf"/>
</dbReference>
<dbReference type="NCBIfam" id="NF004363">
    <property type="entry name" value="PRK05738.2-4"/>
    <property type="match status" value="1"/>
</dbReference>
<dbReference type="NCBIfam" id="NF004364">
    <property type="entry name" value="PRK05738.2-5"/>
    <property type="match status" value="1"/>
</dbReference>
<dbReference type="PANTHER" id="PTHR11620">
    <property type="entry name" value="60S RIBOSOMAL PROTEIN L23A"/>
    <property type="match status" value="1"/>
</dbReference>
<dbReference type="Pfam" id="PF00276">
    <property type="entry name" value="Ribosomal_L23"/>
    <property type="match status" value="1"/>
</dbReference>
<dbReference type="SUPFAM" id="SSF54189">
    <property type="entry name" value="Ribosomal proteins S24e, L23 and L15e"/>
    <property type="match status" value="1"/>
</dbReference>
<organism>
    <name type="scientific">Parafrankia sp. (strain EAN1pec)</name>
    <dbReference type="NCBI Taxonomy" id="298653"/>
    <lineage>
        <taxon>Bacteria</taxon>
        <taxon>Bacillati</taxon>
        <taxon>Actinomycetota</taxon>
        <taxon>Actinomycetes</taxon>
        <taxon>Frankiales</taxon>
        <taxon>Frankiaceae</taxon>
        <taxon>Parafrankia</taxon>
    </lineage>
</organism>
<name>RL23_PARS2</name>
<proteinExistence type="inferred from homology"/>
<keyword id="KW-0687">Ribonucleoprotein</keyword>
<keyword id="KW-0689">Ribosomal protein</keyword>
<keyword id="KW-0694">RNA-binding</keyword>
<keyword id="KW-0699">rRNA-binding</keyword>
<gene>
    <name evidence="1" type="primary">rplW</name>
    <name type="ordered locus">Franean1_6047</name>
</gene>